<sequence length="199" mass="20808">MAKILVLYYSMYGHIETLAGAIAEGARKVSGVDVTIKRVPETMPAEAFAKAGGKTNQQAPVATPHELADYDGIIFGTPTRFGNMSGQMRTFLDQTGGLWASGALYGKVASVFASTGTGGGQEHTITSTWTTLAHHGFIIVPIGYGAKELFDVSQTRGGTPYGATTIAGGDGSRQPSAEELAIARFQGEHVAKITAKLKG</sequence>
<dbReference type="EC" id="1.6.5.2" evidence="1"/>
<dbReference type="EMBL" id="BX936398">
    <property type="protein sequence ID" value="CAH20967.1"/>
    <property type="molecule type" value="Genomic_DNA"/>
</dbReference>
<dbReference type="PDB" id="7Q6M">
    <property type="method" value="X-ray"/>
    <property type="resolution" value="2.04 A"/>
    <property type="chains" value="A/B/C/D=1-199"/>
</dbReference>
<dbReference type="PDB" id="7Q6O">
    <property type="method" value="X-ray"/>
    <property type="resolution" value="1.99 A"/>
    <property type="chains" value="A/B=1-199"/>
</dbReference>
<dbReference type="PDBsum" id="7Q6M"/>
<dbReference type="PDBsum" id="7Q6O"/>
<dbReference type="SMR" id="Q66BP3"/>
<dbReference type="CAZy" id="AA6">
    <property type="family name" value="Auxiliary Activities 6"/>
</dbReference>
<dbReference type="KEGG" id="ypo:BZ17_772"/>
<dbReference type="KEGG" id="yps:YPTB1728"/>
<dbReference type="PATRIC" id="fig|273123.14.peg.817"/>
<dbReference type="Proteomes" id="UP000001011">
    <property type="component" value="Chromosome"/>
</dbReference>
<dbReference type="GO" id="GO:0016020">
    <property type="term" value="C:membrane"/>
    <property type="evidence" value="ECO:0007669"/>
    <property type="project" value="TreeGrafter"/>
</dbReference>
<dbReference type="GO" id="GO:0050660">
    <property type="term" value="F:flavin adenine dinucleotide binding"/>
    <property type="evidence" value="ECO:0007669"/>
    <property type="project" value="UniProtKB-UniRule"/>
</dbReference>
<dbReference type="GO" id="GO:0010181">
    <property type="term" value="F:FMN binding"/>
    <property type="evidence" value="ECO:0007669"/>
    <property type="project" value="InterPro"/>
</dbReference>
<dbReference type="GO" id="GO:0051287">
    <property type="term" value="F:NAD binding"/>
    <property type="evidence" value="ECO:0007669"/>
    <property type="project" value="UniProtKB-UniRule"/>
</dbReference>
<dbReference type="GO" id="GO:0050136">
    <property type="term" value="F:NADH:ubiquinone reductase (non-electrogenic) activity"/>
    <property type="evidence" value="ECO:0007669"/>
    <property type="project" value="RHEA"/>
</dbReference>
<dbReference type="GO" id="GO:0050661">
    <property type="term" value="F:NADP binding"/>
    <property type="evidence" value="ECO:0007669"/>
    <property type="project" value="UniProtKB-UniRule"/>
</dbReference>
<dbReference type="GO" id="GO:0008753">
    <property type="term" value="F:NADPH dehydrogenase (quinone) activity"/>
    <property type="evidence" value="ECO:0007669"/>
    <property type="project" value="RHEA"/>
</dbReference>
<dbReference type="FunFam" id="3.40.50.360:FF:000004">
    <property type="entry name" value="NAD(P)H dehydrogenase (quinone)"/>
    <property type="match status" value="1"/>
</dbReference>
<dbReference type="Gene3D" id="3.40.50.360">
    <property type="match status" value="1"/>
</dbReference>
<dbReference type="HAMAP" id="MF_01017">
    <property type="entry name" value="NQOR"/>
    <property type="match status" value="1"/>
</dbReference>
<dbReference type="InterPro" id="IPR008254">
    <property type="entry name" value="Flavodoxin/NO_synth"/>
</dbReference>
<dbReference type="InterPro" id="IPR029039">
    <property type="entry name" value="Flavoprotein-like_sf"/>
</dbReference>
<dbReference type="InterPro" id="IPR010089">
    <property type="entry name" value="Flavoprotein_WrbA-like"/>
</dbReference>
<dbReference type="InterPro" id="IPR005025">
    <property type="entry name" value="FMN_Rdtase-like_dom"/>
</dbReference>
<dbReference type="InterPro" id="IPR037513">
    <property type="entry name" value="NQO"/>
</dbReference>
<dbReference type="NCBIfam" id="TIGR01755">
    <property type="entry name" value="flav_wrbA"/>
    <property type="match status" value="1"/>
</dbReference>
<dbReference type="NCBIfam" id="NF002999">
    <property type="entry name" value="PRK03767.1"/>
    <property type="match status" value="1"/>
</dbReference>
<dbReference type="PANTHER" id="PTHR30546">
    <property type="entry name" value="FLAVODOXIN-RELATED PROTEIN WRBA-RELATED"/>
    <property type="match status" value="1"/>
</dbReference>
<dbReference type="PANTHER" id="PTHR30546:SF23">
    <property type="entry name" value="FLAVOPROTEIN-LIKE PROTEIN YCP4-RELATED"/>
    <property type="match status" value="1"/>
</dbReference>
<dbReference type="Pfam" id="PF03358">
    <property type="entry name" value="FMN_red"/>
    <property type="match status" value="1"/>
</dbReference>
<dbReference type="SUPFAM" id="SSF52218">
    <property type="entry name" value="Flavoproteins"/>
    <property type="match status" value="1"/>
</dbReference>
<dbReference type="PROSITE" id="PS50902">
    <property type="entry name" value="FLAVODOXIN_LIKE"/>
    <property type="match status" value="1"/>
</dbReference>
<protein>
    <recommendedName>
        <fullName evidence="1">NAD(P)H dehydrogenase (quinone)</fullName>
        <ecNumber evidence="1">1.6.5.2</ecNumber>
    </recommendedName>
    <alternativeName>
        <fullName>Flavoprotein WrbA</fullName>
    </alternativeName>
    <alternativeName>
        <fullName evidence="1">NAD(P)H:quinone oxidoreductase</fullName>
        <shortName evidence="1">NQO</shortName>
    </alternativeName>
</protein>
<proteinExistence type="evidence at protein level"/>
<reference key="1">
    <citation type="journal article" date="2004" name="Proc. Natl. Acad. Sci. U.S.A.">
        <title>Insights into the evolution of Yersinia pestis through whole-genome comparison with Yersinia pseudotuberculosis.</title>
        <authorList>
            <person name="Chain P.S.G."/>
            <person name="Carniel E."/>
            <person name="Larimer F.W."/>
            <person name="Lamerdin J."/>
            <person name="Stoutland P.O."/>
            <person name="Regala W.M."/>
            <person name="Georgescu A.M."/>
            <person name="Vergez L.M."/>
            <person name="Land M.L."/>
            <person name="Motin V.L."/>
            <person name="Brubaker R.R."/>
            <person name="Fowler J."/>
            <person name="Hinnebusch J."/>
            <person name="Marceau M."/>
            <person name="Medigue C."/>
            <person name="Simonet M."/>
            <person name="Chenal-Francisque V."/>
            <person name="Souza B."/>
            <person name="Dacheux D."/>
            <person name="Elliott J.M."/>
            <person name="Derbise A."/>
            <person name="Hauser L.J."/>
            <person name="Garcia E."/>
        </authorList>
    </citation>
    <scope>NUCLEOTIDE SEQUENCE [LARGE SCALE GENOMIC DNA]</scope>
    <source>
        <strain>IP32953</strain>
    </source>
</reference>
<keyword id="KW-0002">3D-structure</keyword>
<keyword id="KW-0285">Flavoprotein</keyword>
<keyword id="KW-0288">FMN</keyword>
<keyword id="KW-0520">NAD</keyword>
<keyword id="KW-0521">NADP</keyword>
<keyword id="KW-0547">Nucleotide-binding</keyword>
<keyword id="KW-0560">Oxidoreductase</keyword>
<accession>Q66BP3</accession>
<organism>
    <name type="scientific">Yersinia pseudotuberculosis serotype I (strain IP32953)</name>
    <dbReference type="NCBI Taxonomy" id="273123"/>
    <lineage>
        <taxon>Bacteria</taxon>
        <taxon>Pseudomonadati</taxon>
        <taxon>Pseudomonadota</taxon>
        <taxon>Gammaproteobacteria</taxon>
        <taxon>Enterobacterales</taxon>
        <taxon>Yersiniaceae</taxon>
        <taxon>Yersinia</taxon>
    </lineage>
</organism>
<feature type="chain" id="PRO_0000200760" description="NAD(P)H dehydrogenase (quinone)">
    <location>
        <begin position="1"/>
        <end position="199"/>
    </location>
</feature>
<feature type="domain" description="Flavodoxin-like" evidence="1">
    <location>
        <begin position="4"/>
        <end position="190"/>
    </location>
</feature>
<feature type="binding site" evidence="1">
    <location>
        <begin position="10"/>
        <end position="15"/>
    </location>
    <ligand>
        <name>FMN</name>
        <dbReference type="ChEBI" id="CHEBI:58210"/>
    </ligand>
</feature>
<feature type="binding site" evidence="1">
    <location>
        <position position="12"/>
    </location>
    <ligand>
        <name>NAD(+)</name>
        <dbReference type="ChEBI" id="CHEBI:57540"/>
    </ligand>
</feature>
<feature type="binding site" evidence="1">
    <location>
        <begin position="79"/>
        <end position="81"/>
    </location>
    <ligand>
        <name>FMN</name>
        <dbReference type="ChEBI" id="CHEBI:58210"/>
    </ligand>
</feature>
<feature type="binding site" evidence="1">
    <location>
        <position position="99"/>
    </location>
    <ligand>
        <name>substrate</name>
    </ligand>
</feature>
<feature type="binding site" evidence="1">
    <location>
        <begin position="114"/>
        <end position="119"/>
    </location>
    <ligand>
        <name>FMN</name>
        <dbReference type="ChEBI" id="CHEBI:58210"/>
    </ligand>
</feature>
<feature type="binding site" evidence="1">
    <location>
        <position position="134"/>
    </location>
    <ligand>
        <name>FMN</name>
        <dbReference type="ChEBI" id="CHEBI:58210"/>
    </ligand>
</feature>
<feature type="strand" evidence="2">
    <location>
        <begin position="2"/>
        <end position="8"/>
    </location>
</feature>
<feature type="strand" evidence="2">
    <location>
        <begin position="11"/>
        <end position="13"/>
    </location>
</feature>
<feature type="helix" evidence="2">
    <location>
        <begin position="14"/>
        <end position="27"/>
    </location>
</feature>
<feature type="strand" evidence="2">
    <location>
        <begin position="32"/>
        <end position="38"/>
    </location>
</feature>
<feature type="helix" evidence="2">
    <location>
        <begin position="45"/>
        <end position="50"/>
    </location>
</feature>
<feature type="helix" evidence="2">
    <location>
        <begin position="64"/>
        <end position="69"/>
    </location>
</feature>
<feature type="strand" evidence="2">
    <location>
        <begin position="71"/>
        <end position="80"/>
    </location>
</feature>
<feature type="helix" evidence="2">
    <location>
        <begin position="86"/>
        <end position="93"/>
    </location>
</feature>
<feature type="helix" evidence="2">
    <location>
        <begin position="96"/>
        <end position="100"/>
    </location>
</feature>
<feature type="turn" evidence="2">
    <location>
        <begin position="101"/>
        <end position="106"/>
    </location>
</feature>
<feature type="strand" evidence="2">
    <location>
        <begin position="108"/>
        <end position="118"/>
    </location>
</feature>
<feature type="helix" evidence="2">
    <location>
        <begin position="121"/>
        <end position="134"/>
    </location>
</feature>
<feature type="helix" evidence="2">
    <location>
        <begin position="147"/>
        <end position="150"/>
    </location>
</feature>
<feature type="strand" evidence="2">
    <location>
        <begin position="164"/>
        <end position="166"/>
    </location>
</feature>
<feature type="helix" evidence="2">
    <location>
        <begin position="177"/>
        <end position="198"/>
    </location>
</feature>
<comment type="catalytic activity">
    <reaction evidence="1">
        <text>a quinone + NADH + H(+) = a quinol + NAD(+)</text>
        <dbReference type="Rhea" id="RHEA:46160"/>
        <dbReference type="ChEBI" id="CHEBI:15378"/>
        <dbReference type="ChEBI" id="CHEBI:24646"/>
        <dbReference type="ChEBI" id="CHEBI:57540"/>
        <dbReference type="ChEBI" id="CHEBI:57945"/>
        <dbReference type="ChEBI" id="CHEBI:132124"/>
        <dbReference type="EC" id="1.6.5.2"/>
    </reaction>
</comment>
<comment type="catalytic activity">
    <reaction evidence="1">
        <text>a quinone + NADPH + H(+) = a quinol + NADP(+)</text>
        <dbReference type="Rhea" id="RHEA:46164"/>
        <dbReference type="ChEBI" id="CHEBI:15378"/>
        <dbReference type="ChEBI" id="CHEBI:24646"/>
        <dbReference type="ChEBI" id="CHEBI:57783"/>
        <dbReference type="ChEBI" id="CHEBI:58349"/>
        <dbReference type="ChEBI" id="CHEBI:132124"/>
        <dbReference type="EC" id="1.6.5.2"/>
    </reaction>
</comment>
<comment type="cofactor">
    <cofactor evidence="1">
        <name>FMN</name>
        <dbReference type="ChEBI" id="CHEBI:58210"/>
    </cofactor>
    <text evidence="1">Binds 1 FMN per monomer.</text>
</comment>
<comment type="similarity">
    <text evidence="1">Belongs to the WrbA family.</text>
</comment>
<evidence type="ECO:0000255" key="1">
    <source>
        <dbReference type="HAMAP-Rule" id="MF_01017"/>
    </source>
</evidence>
<evidence type="ECO:0007829" key="2">
    <source>
        <dbReference type="PDB" id="7Q6O"/>
    </source>
</evidence>
<gene>
    <name type="ordered locus">YPTB1728</name>
</gene>
<name>NQOR_YERPS</name>